<evidence type="ECO:0000255" key="1">
    <source>
        <dbReference type="HAMAP-Rule" id="MF_04026"/>
    </source>
</evidence>
<gene>
    <name evidence="1" type="primary">RIR1</name>
    <name type="ordered locus">ORF19</name>
</gene>
<dbReference type="EC" id="1.17.4.1" evidence="1"/>
<dbReference type="EMBL" id="X04370">
    <property type="protein sequence ID" value="CAA27902.1"/>
    <property type="molecule type" value="Genomic_DNA"/>
</dbReference>
<dbReference type="PIR" id="A27343">
    <property type="entry name" value="WMBE19"/>
</dbReference>
<dbReference type="SMR" id="P09248"/>
<dbReference type="Proteomes" id="UP000002602">
    <property type="component" value="Genome"/>
</dbReference>
<dbReference type="GO" id="GO:0005524">
    <property type="term" value="F:ATP binding"/>
    <property type="evidence" value="ECO:0007669"/>
    <property type="project" value="UniProtKB-UniRule"/>
</dbReference>
<dbReference type="GO" id="GO:0004748">
    <property type="term" value="F:ribonucleoside-diphosphate reductase activity, thioredoxin disulfide as acceptor"/>
    <property type="evidence" value="ECO:0007669"/>
    <property type="project" value="UniProtKB-UniRule"/>
</dbReference>
<dbReference type="GO" id="GO:0009263">
    <property type="term" value="P:deoxyribonucleotide biosynthetic process"/>
    <property type="evidence" value="ECO:0007669"/>
    <property type="project" value="InterPro"/>
</dbReference>
<dbReference type="GO" id="GO:0006260">
    <property type="term" value="P:DNA replication"/>
    <property type="evidence" value="ECO:0007669"/>
    <property type="project" value="UniProtKB-KW"/>
</dbReference>
<dbReference type="GO" id="GO:0019046">
    <property type="term" value="P:release from viral latency"/>
    <property type="evidence" value="ECO:0007669"/>
    <property type="project" value="UniProtKB-KW"/>
</dbReference>
<dbReference type="Gene3D" id="3.20.70.20">
    <property type="match status" value="1"/>
</dbReference>
<dbReference type="HAMAP" id="MF_04026">
    <property type="entry name" value="HSV_RIR1"/>
    <property type="match status" value="1"/>
</dbReference>
<dbReference type="InterPro" id="IPR034717">
    <property type="entry name" value="HSV_RIR1"/>
</dbReference>
<dbReference type="InterPro" id="IPR013346">
    <property type="entry name" value="NrdE_NrdA_C"/>
</dbReference>
<dbReference type="InterPro" id="IPR000788">
    <property type="entry name" value="RNR_lg_C"/>
</dbReference>
<dbReference type="InterPro" id="IPR013509">
    <property type="entry name" value="RNR_lsu_N"/>
</dbReference>
<dbReference type="InterPro" id="IPR039718">
    <property type="entry name" value="Rrm1"/>
</dbReference>
<dbReference type="NCBIfam" id="TIGR02506">
    <property type="entry name" value="NrdE_NrdA"/>
    <property type="match status" value="1"/>
</dbReference>
<dbReference type="PANTHER" id="PTHR11573">
    <property type="entry name" value="RIBONUCLEOSIDE-DIPHOSPHATE REDUCTASE LARGE CHAIN"/>
    <property type="match status" value="1"/>
</dbReference>
<dbReference type="PANTHER" id="PTHR11573:SF6">
    <property type="entry name" value="RIBONUCLEOSIDE-DIPHOSPHATE REDUCTASE LARGE SUBUNIT"/>
    <property type="match status" value="1"/>
</dbReference>
<dbReference type="Pfam" id="PF02867">
    <property type="entry name" value="Ribonuc_red_lgC"/>
    <property type="match status" value="1"/>
</dbReference>
<dbReference type="Pfam" id="PF00317">
    <property type="entry name" value="Ribonuc_red_lgN"/>
    <property type="match status" value="1"/>
</dbReference>
<dbReference type="PRINTS" id="PR01183">
    <property type="entry name" value="RIBORDTASEM1"/>
</dbReference>
<dbReference type="SUPFAM" id="SSF51998">
    <property type="entry name" value="PFL-like glycyl radical enzymes"/>
    <property type="match status" value="1"/>
</dbReference>
<dbReference type="PROSITE" id="PS00089">
    <property type="entry name" value="RIBORED_LARGE"/>
    <property type="match status" value="1"/>
</dbReference>
<proteinExistence type="inferred from homology"/>
<reference key="1">
    <citation type="journal article" date="1986" name="J. Gen. Virol.">
        <title>The complete DNA sequence of varicella-zoster virus.</title>
        <authorList>
            <person name="Davison A.J."/>
            <person name="Scott J.E."/>
        </authorList>
    </citation>
    <scope>NUCLEOTIDE SEQUENCE [LARGE SCALE GENOMIC DNA]</scope>
</reference>
<reference key="2">
    <citation type="journal article" date="2009" name="Trends Biochem. Sci.">
        <title>Tinkering with a viral ribonucleotide reductase.</title>
        <authorList>
            <person name="Lembo D."/>
            <person name="Brune W."/>
        </authorList>
    </citation>
    <scope>REVIEW</scope>
</reference>
<keyword id="KW-0067">ATP-binding</keyword>
<keyword id="KW-1015">Disulfide bond</keyword>
<keyword id="KW-0235">DNA replication</keyword>
<keyword id="KW-0244">Early protein</keyword>
<keyword id="KW-0547">Nucleotide-binding</keyword>
<keyword id="KW-0560">Oxidoreductase</keyword>
<keyword id="KW-1185">Reference proteome</keyword>
<keyword id="KW-1251">Viral latency</keyword>
<keyword id="KW-1272">Viral reactivation from latency</keyword>
<organism>
    <name type="scientific">Varicella-zoster virus (strain Dumas)</name>
    <name type="common">HHV-3</name>
    <name type="synonym">Human herpesvirus 3</name>
    <dbReference type="NCBI Taxonomy" id="10338"/>
    <lineage>
        <taxon>Viruses</taxon>
        <taxon>Duplodnaviria</taxon>
        <taxon>Heunggongvirae</taxon>
        <taxon>Peploviricota</taxon>
        <taxon>Herviviricetes</taxon>
        <taxon>Herpesvirales</taxon>
        <taxon>Orthoherpesviridae</taxon>
        <taxon>Alphaherpesvirinae</taxon>
        <taxon>Varicellovirus</taxon>
        <taxon>Varicellovirus humanalpha3</taxon>
        <taxon>Human herpesvirus 3</taxon>
    </lineage>
</organism>
<organismHost>
    <name type="scientific">Homo sapiens</name>
    <name type="common">Human</name>
    <dbReference type="NCBI Taxonomy" id="9606"/>
</organismHost>
<comment type="function">
    <text evidence="1">Ribonucleoside-diphosphate reductase holoenzyme provides the precursors necessary for viral DNA synthesis. Allows virus growth in non-dividing cells, as well as reactivation from latency in infected hosts. Catalyzes the biosynthesis of deoxyribonucleotides from the corresponding ribonucleotides.</text>
</comment>
<comment type="catalytic activity">
    <reaction evidence="1">
        <text>a 2'-deoxyribonucleoside 5'-diphosphate + [thioredoxin]-disulfide + H2O = a ribonucleoside 5'-diphosphate + [thioredoxin]-dithiol</text>
        <dbReference type="Rhea" id="RHEA:23252"/>
        <dbReference type="Rhea" id="RHEA-COMP:10698"/>
        <dbReference type="Rhea" id="RHEA-COMP:10700"/>
        <dbReference type="ChEBI" id="CHEBI:15377"/>
        <dbReference type="ChEBI" id="CHEBI:29950"/>
        <dbReference type="ChEBI" id="CHEBI:50058"/>
        <dbReference type="ChEBI" id="CHEBI:57930"/>
        <dbReference type="ChEBI" id="CHEBI:73316"/>
        <dbReference type="EC" id="1.17.4.1"/>
    </reaction>
</comment>
<comment type="subunit">
    <text evidence="1">Heterotetramer composed of a homodimer of the large subunit (R1) and a homodimer of the small subunit (R2). Larger multisubunit protein complex are also active, composed of (R1)n(R2)n.</text>
</comment>
<comment type="similarity">
    <text evidence="1">Belongs to the ribonucleoside diphosphate reductase large chain family.</text>
</comment>
<accession>P09248</accession>
<protein>
    <recommendedName>
        <fullName evidence="1">Ribonucleoside-diphosphate reductase large subunit</fullName>
        <shortName evidence="1">R1</shortName>
        <ecNumber evidence="1">1.17.4.1</ecNumber>
    </recommendedName>
    <alternativeName>
        <fullName evidence="1">Ribonucleotide reductase large subunit</fullName>
    </alternativeName>
</protein>
<feature type="chain" id="PRO_0000187245" description="Ribonucleoside-diphosphate reductase large subunit">
    <location>
        <begin position="1"/>
        <end position="775"/>
    </location>
</feature>
<feature type="active site" description="Proton acceptor" evidence="1">
    <location>
        <position position="427"/>
    </location>
</feature>
<feature type="active site" description="Cysteine radical intermediate" evidence="1">
    <location>
        <position position="429"/>
    </location>
</feature>
<feature type="active site" description="Proton acceptor" evidence="1">
    <location>
        <position position="431"/>
    </location>
</feature>
<feature type="binding site" evidence="1">
    <location>
        <position position="200"/>
    </location>
    <ligand>
        <name>substrate</name>
    </ligand>
</feature>
<feature type="binding site" evidence="1">
    <location>
        <begin position="215"/>
        <end position="216"/>
    </location>
    <ligand>
        <name>substrate</name>
    </ligand>
</feature>
<feature type="binding site" evidence="1">
    <location>
        <position position="246"/>
    </location>
    <ligand>
        <name>substrate</name>
    </ligand>
</feature>
<feature type="binding site" evidence="1">
    <location>
        <begin position="427"/>
        <end position="431"/>
    </location>
    <ligand>
        <name>substrate</name>
    </ligand>
</feature>
<feature type="binding site" evidence="1">
    <location>
        <begin position="606"/>
        <end position="610"/>
    </location>
    <ligand>
        <name>substrate</name>
    </ligand>
</feature>
<feature type="site" description="Important for hydrogen atom transfer" evidence="1">
    <location>
        <position position="216"/>
    </location>
</feature>
<feature type="site" description="Important for hydrogen atom transfer" evidence="1">
    <location>
        <position position="444"/>
    </location>
</feature>
<feature type="site" description="Important for electron transfer" evidence="1">
    <location>
        <position position="750"/>
    </location>
</feature>
<feature type="site" description="Important for electron transfer" evidence="1">
    <location>
        <position position="751"/>
    </location>
</feature>
<feature type="site" description="Interacts with thioredoxin/glutaredoxin" evidence="1">
    <location>
        <position position="770"/>
    </location>
</feature>
<feature type="site" description="Interacts with thioredoxin/glutaredoxin" evidence="1">
    <location>
        <position position="773"/>
    </location>
</feature>
<feature type="disulfide bond" description="Redox-active" evidence="1">
    <location>
        <begin position="216"/>
        <end position="444"/>
    </location>
</feature>
<sequence length="775" mass="86828">MEFKRIFNTVHDIINRLCQHGYKEYIIPPESTTPVELMEYISTIVSKLKAVTRQDERVYRCCGELIHCRINLRSVSMETWLTSPILCLTPRVRQAIEGRRDEIRRAILEPFLKDQYPALATLGLQSALKYEDFYLTKLEEGKLESLCQFFLRLAATVTTEIVNLPKIATLIPGINDGYTWTDVCRVFFTALACQKIVPATPVMMFLGRETGATASCYLMDPESITVGRAVRAITGDVGTVLQSRGGVGISLQSLNLIPTENQTKGLLAVLKLLDCMVMAINSDCERPTGVCVYIEPWHVDLQTVLATRGMLVRDEIFRCDNIFCCLWTPDLFFERYLSYLKGASNVQWTLFDNRADILRTLHGEAFTSTYLRLEREGLGVSSVPIQDIAFTIIRSAAVTGSPFLMFKDACNRNYHMNTQGNAITGSNLCTEIVQKADAHQHGVCNLASINLTTCLSKGPVSFNLNDLQLTARTTVIFLNGVLAAGNFPCKKSCKGVKNNRSLGIGIQGLHTTCLRLGFDLTSQPARRLNVQIAELMLYETMKTSMEMCKIGGLAPFKGFTESKYAKGWLHQDGFSTISYLDLPWCTLRDDICAYGLYNSQFLALMPTVSSAQVTECSEGFSPIYNNMFSKVTTSGELLRPNLDLMDELRDMYSCEEKRLEVINILEKNQWSVIRSFGCLSNSHPLLKYKTAFEYEQEDLVDMCAERAPFIDQSQSMTLFIEERPDGTIPASKIMNLLIRAYKAGLKTGMYYCKIRKATNSGLFAGGELTCTSCAL</sequence>
<name>RIR1_VZVD</name>